<evidence type="ECO:0000255" key="1">
    <source>
        <dbReference type="HAMAP-Rule" id="MF_00019"/>
    </source>
</evidence>
<sequence length="332" mass="35192">MRLAIDAMGGDHAPKEVVLGAMDAVKELDVEITLYGDENQISPHLTNNKNITIVHTEEVITSNDEPVRAVRRKKNASLVLMANAVKEKQADACISAGNTGALMSAGLFVVGRIPGIDRPALSPTLPTVDGKGFLMLDVGANVDAKPDHLLQYAIMGSIYSEKVRKIQQPRVGLLNVGTEDGKGNDLTKKAFELLQSAPINFVGNVEARDILNGVADVVVTDGFSGNVALKTIEGTAETIFSLLKGTLMSSTKTKLAAALVKKDLGGLKDKLDYSEYGGAGLFGLAAPVIKAHGSSNARAIYNAIKQAKHMVEFEVTPTITATVESIGKVEEE</sequence>
<protein>
    <recommendedName>
        <fullName evidence="1">Phosphate acyltransferase</fullName>
        <ecNumber evidence="1">2.3.1.274</ecNumber>
    </recommendedName>
    <alternativeName>
        <fullName evidence="1">Acyl-ACP phosphotransacylase</fullName>
    </alternativeName>
    <alternativeName>
        <fullName evidence="1">Acyl-[acyl-carrier-protein]--phosphate acyltransferase</fullName>
    </alternativeName>
    <alternativeName>
        <fullName evidence="1">Phosphate-acyl-ACP acyltransferase</fullName>
    </alternativeName>
</protein>
<keyword id="KW-0963">Cytoplasm</keyword>
<keyword id="KW-0444">Lipid biosynthesis</keyword>
<keyword id="KW-0443">Lipid metabolism</keyword>
<keyword id="KW-0594">Phospholipid biosynthesis</keyword>
<keyword id="KW-1208">Phospholipid metabolism</keyword>
<keyword id="KW-1185">Reference proteome</keyword>
<keyword id="KW-0808">Transferase</keyword>
<proteinExistence type="inferred from homology"/>
<comment type="function">
    <text evidence="1">Catalyzes the reversible formation of acyl-phosphate (acyl-PO(4)) from acyl-[acyl-carrier-protein] (acyl-ACP). This enzyme utilizes acyl-ACP as fatty acyl donor, but not acyl-CoA.</text>
</comment>
<comment type="catalytic activity">
    <reaction evidence="1">
        <text>a fatty acyl-[ACP] + phosphate = an acyl phosphate + holo-[ACP]</text>
        <dbReference type="Rhea" id="RHEA:42292"/>
        <dbReference type="Rhea" id="RHEA-COMP:9685"/>
        <dbReference type="Rhea" id="RHEA-COMP:14125"/>
        <dbReference type="ChEBI" id="CHEBI:43474"/>
        <dbReference type="ChEBI" id="CHEBI:59918"/>
        <dbReference type="ChEBI" id="CHEBI:64479"/>
        <dbReference type="ChEBI" id="CHEBI:138651"/>
        <dbReference type="EC" id="2.3.1.274"/>
    </reaction>
</comment>
<comment type="pathway">
    <text evidence="1">Lipid metabolism; phospholipid metabolism.</text>
</comment>
<comment type="subunit">
    <text evidence="1">Homodimer. Probably interacts with PlsY.</text>
</comment>
<comment type="subcellular location">
    <subcellularLocation>
        <location evidence="1">Cytoplasm</location>
    </subcellularLocation>
    <text evidence="1">Associated with the membrane possibly through PlsY.</text>
</comment>
<comment type="similarity">
    <text evidence="1">Belongs to the PlsX family.</text>
</comment>
<reference key="1">
    <citation type="journal article" date="2002" name="Nucleic Acids Res.">
        <title>Genome sequence of Oceanobacillus iheyensis isolated from the Iheya Ridge and its unexpected adaptive capabilities to extreme environments.</title>
        <authorList>
            <person name="Takami H."/>
            <person name="Takaki Y."/>
            <person name="Uchiyama I."/>
        </authorList>
    </citation>
    <scope>NUCLEOTIDE SEQUENCE [LARGE SCALE GENOMIC DNA]</scope>
    <source>
        <strain>DSM 14371 / CIP 107618 / JCM 11309 / KCTC 3954 / HTE831</strain>
    </source>
</reference>
<gene>
    <name evidence="1" type="primary">plsX</name>
    <name type="ordered locus">OB1522</name>
</gene>
<name>PLSX_OCEIH</name>
<feature type="chain" id="PRO_0000189914" description="Phosphate acyltransferase">
    <location>
        <begin position="1"/>
        <end position="332"/>
    </location>
</feature>
<organism>
    <name type="scientific">Oceanobacillus iheyensis (strain DSM 14371 / CIP 107618 / JCM 11309 / KCTC 3954 / HTE831)</name>
    <dbReference type="NCBI Taxonomy" id="221109"/>
    <lineage>
        <taxon>Bacteria</taxon>
        <taxon>Bacillati</taxon>
        <taxon>Bacillota</taxon>
        <taxon>Bacilli</taxon>
        <taxon>Bacillales</taxon>
        <taxon>Bacillaceae</taxon>
        <taxon>Oceanobacillus</taxon>
    </lineage>
</organism>
<dbReference type="EC" id="2.3.1.274" evidence="1"/>
<dbReference type="EMBL" id="BA000028">
    <property type="protein sequence ID" value="BAC13478.1"/>
    <property type="molecule type" value="Genomic_DNA"/>
</dbReference>
<dbReference type="RefSeq" id="WP_011065922.1">
    <property type="nucleotide sequence ID" value="NC_004193.1"/>
</dbReference>
<dbReference type="SMR" id="Q8ER09"/>
<dbReference type="STRING" id="221109.gene:10733762"/>
<dbReference type="KEGG" id="oih:OB1522"/>
<dbReference type="eggNOG" id="COG0416">
    <property type="taxonomic scope" value="Bacteria"/>
</dbReference>
<dbReference type="HOGENOM" id="CLU_039379_1_1_9"/>
<dbReference type="OrthoDB" id="9806408at2"/>
<dbReference type="PhylomeDB" id="Q8ER09"/>
<dbReference type="UniPathway" id="UPA00085"/>
<dbReference type="Proteomes" id="UP000000822">
    <property type="component" value="Chromosome"/>
</dbReference>
<dbReference type="GO" id="GO:0005737">
    <property type="term" value="C:cytoplasm"/>
    <property type="evidence" value="ECO:0007669"/>
    <property type="project" value="UniProtKB-SubCell"/>
</dbReference>
<dbReference type="GO" id="GO:0043811">
    <property type="term" value="F:phosphate:acyl-[acyl carrier protein] acyltransferase activity"/>
    <property type="evidence" value="ECO:0007669"/>
    <property type="project" value="UniProtKB-UniRule"/>
</dbReference>
<dbReference type="GO" id="GO:0006633">
    <property type="term" value="P:fatty acid biosynthetic process"/>
    <property type="evidence" value="ECO:0007669"/>
    <property type="project" value="UniProtKB-UniRule"/>
</dbReference>
<dbReference type="GO" id="GO:0008654">
    <property type="term" value="P:phospholipid biosynthetic process"/>
    <property type="evidence" value="ECO:0007669"/>
    <property type="project" value="UniProtKB-KW"/>
</dbReference>
<dbReference type="Gene3D" id="3.40.718.10">
    <property type="entry name" value="Isopropylmalate Dehydrogenase"/>
    <property type="match status" value="1"/>
</dbReference>
<dbReference type="HAMAP" id="MF_00019">
    <property type="entry name" value="PlsX"/>
    <property type="match status" value="1"/>
</dbReference>
<dbReference type="InterPro" id="IPR003664">
    <property type="entry name" value="FA_synthesis"/>
</dbReference>
<dbReference type="InterPro" id="IPR012281">
    <property type="entry name" value="Phospholipid_synth_PlsX-like"/>
</dbReference>
<dbReference type="NCBIfam" id="TIGR00182">
    <property type="entry name" value="plsX"/>
    <property type="match status" value="1"/>
</dbReference>
<dbReference type="PANTHER" id="PTHR30100">
    <property type="entry name" value="FATTY ACID/PHOSPHOLIPID SYNTHESIS PROTEIN PLSX"/>
    <property type="match status" value="1"/>
</dbReference>
<dbReference type="PANTHER" id="PTHR30100:SF1">
    <property type="entry name" value="PHOSPHATE ACYLTRANSFERASE"/>
    <property type="match status" value="1"/>
</dbReference>
<dbReference type="Pfam" id="PF02504">
    <property type="entry name" value="FA_synthesis"/>
    <property type="match status" value="1"/>
</dbReference>
<dbReference type="PIRSF" id="PIRSF002465">
    <property type="entry name" value="Phsphlp_syn_PlsX"/>
    <property type="match status" value="1"/>
</dbReference>
<dbReference type="SUPFAM" id="SSF53659">
    <property type="entry name" value="Isocitrate/Isopropylmalate dehydrogenase-like"/>
    <property type="match status" value="1"/>
</dbReference>
<accession>Q8ER09</accession>